<evidence type="ECO:0000250" key="1">
    <source>
        <dbReference type="UniProtKB" id="P03901"/>
    </source>
</evidence>
<evidence type="ECO:0000250" key="2">
    <source>
        <dbReference type="UniProtKB" id="P03902"/>
    </source>
</evidence>
<evidence type="ECO:0000255" key="3"/>
<evidence type="ECO:0000305" key="4"/>
<sequence>MPIIYMNIMLAFLISLLGMLFYRSHLMSSLLCLEGMMLSLFIMSTLMALNMHFPLANIVPIALLVFAACEAAVGLALLVSISNTYGLDYIHNLNLLQC</sequence>
<comment type="function">
    <text evidence="1">Core subunit of the mitochondrial membrane respiratory chain NADH dehydrogenase (Complex I) which catalyzes electron transfer from NADH through the respiratory chain, using ubiquinone as an electron acceptor. Part of the enzyme membrane arm which is embedded in the lipid bilayer and involved in proton translocation.</text>
</comment>
<comment type="catalytic activity">
    <reaction evidence="1">
        <text>a ubiquinone + NADH + 5 H(+)(in) = a ubiquinol + NAD(+) + 4 H(+)(out)</text>
        <dbReference type="Rhea" id="RHEA:29091"/>
        <dbReference type="Rhea" id="RHEA-COMP:9565"/>
        <dbReference type="Rhea" id="RHEA-COMP:9566"/>
        <dbReference type="ChEBI" id="CHEBI:15378"/>
        <dbReference type="ChEBI" id="CHEBI:16389"/>
        <dbReference type="ChEBI" id="CHEBI:17976"/>
        <dbReference type="ChEBI" id="CHEBI:57540"/>
        <dbReference type="ChEBI" id="CHEBI:57945"/>
        <dbReference type="EC" id="7.1.1.2"/>
    </reaction>
    <physiologicalReaction direction="left-to-right" evidence="1">
        <dbReference type="Rhea" id="RHEA:29092"/>
    </physiologicalReaction>
</comment>
<comment type="subunit">
    <text evidence="2">Core subunit of respiratory chain NADH dehydrogenase (Complex I) which is composed of 45 different subunits.</text>
</comment>
<comment type="subcellular location">
    <subcellularLocation>
        <location evidence="2">Mitochondrion inner membrane</location>
        <topology evidence="3">Multi-pass membrane protein</topology>
    </subcellularLocation>
</comment>
<comment type="similarity">
    <text evidence="4">Belongs to the complex I subunit 4L family.</text>
</comment>
<dbReference type="EC" id="7.1.1.2"/>
<dbReference type="EMBL" id="AY863425">
    <property type="protein sequence ID" value="AAX19328.1"/>
    <property type="molecule type" value="Genomic_DNA"/>
</dbReference>
<dbReference type="RefSeq" id="YP_214948.1">
    <property type="nucleotide sequence ID" value="NC_006900.1"/>
</dbReference>
<dbReference type="SMR" id="Q5BU90"/>
<dbReference type="GeneID" id="3332196"/>
<dbReference type="CTD" id="4539"/>
<dbReference type="GO" id="GO:0005743">
    <property type="term" value="C:mitochondrial inner membrane"/>
    <property type="evidence" value="ECO:0000250"/>
    <property type="project" value="UniProtKB"/>
</dbReference>
<dbReference type="GO" id="GO:0045271">
    <property type="term" value="C:respiratory chain complex I"/>
    <property type="evidence" value="ECO:0000250"/>
    <property type="project" value="UniProtKB"/>
</dbReference>
<dbReference type="GO" id="GO:0008137">
    <property type="term" value="F:NADH dehydrogenase (ubiquinone) activity"/>
    <property type="evidence" value="ECO:0000250"/>
    <property type="project" value="UniProtKB"/>
</dbReference>
<dbReference type="GO" id="GO:0042773">
    <property type="term" value="P:ATP synthesis coupled electron transport"/>
    <property type="evidence" value="ECO:0007669"/>
    <property type="project" value="InterPro"/>
</dbReference>
<dbReference type="FunFam" id="1.10.287.3510:FF:000002">
    <property type="entry name" value="NADH-ubiquinone oxidoreductase chain 4L"/>
    <property type="match status" value="1"/>
</dbReference>
<dbReference type="Gene3D" id="1.10.287.3510">
    <property type="match status" value="1"/>
</dbReference>
<dbReference type="InterPro" id="IPR001133">
    <property type="entry name" value="NADH_UbQ_OxRdtase_chain4L/K"/>
</dbReference>
<dbReference type="InterPro" id="IPR039428">
    <property type="entry name" value="NUOK/Mnh_C1-like"/>
</dbReference>
<dbReference type="PANTHER" id="PTHR11434:SF0">
    <property type="entry name" value="NADH-UBIQUINONE OXIDOREDUCTASE CHAIN 4L"/>
    <property type="match status" value="1"/>
</dbReference>
<dbReference type="PANTHER" id="PTHR11434">
    <property type="entry name" value="NADH-UBIQUINONE OXIDOREDUCTASE SUBUNIT ND4L"/>
    <property type="match status" value="1"/>
</dbReference>
<dbReference type="Pfam" id="PF00420">
    <property type="entry name" value="Oxidored_q2"/>
    <property type="match status" value="1"/>
</dbReference>
<name>NU4LM_TRAOB</name>
<proteinExistence type="inferred from homology"/>
<organism>
    <name type="scientific">Trachypithecus obscurus</name>
    <name type="common">Dusky leaf-monkey</name>
    <name type="synonym">Presbytis obscura</name>
    <dbReference type="NCBI Taxonomy" id="54181"/>
    <lineage>
        <taxon>Eukaryota</taxon>
        <taxon>Metazoa</taxon>
        <taxon>Chordata</taxon>
        <taxon>Craniata</taxon>
        <taxon>Vertebrata</taxon>
        <taxon>Euteleostomi</taxon>
        <taxon>Mammalia</taxon>
        <taxon>Eutheria</taxon>
        <taxon>Euarchontoglires</taxon>
        <taxon>Primates</taxon>
        <taxon>Haplorrhini</taxon>
        <taxon>Catarrhini</taxon>
        <taxon>Cercopithecidae</taxon>
        <taxon>Colobinae</taxon>
        <taxon>Trachypithecus</taxon>
    </lineage>
</organism>
<reference key="1">
    <citation type="journal article" date="2005" name="J. Hum. Evol.">
        <title>Catarrhine primate divergence dates estimated from complete mitochondrial genomes: concordance with fossil and nuclear DNA evidence.</title>
        <authorList>
            <person name="Raaum R.L."/>
            <person name="Sterner K.N."/>
            <person name="Noviello C.M."/>
            <person name="Stewart C.-B.R."/>
            <person name="Disotell T.R."/>
        </authorList>
    </citation>
    <scope>NUCLEOTIDE SEQUENCE [GENOMIC DNA]</scope>
</reference>
<feature type="chain" id="PRO_0000275133" description="NADH-ubiquinone oxidoreductase chain 4L">
    <location>
        <begin position="1"/>
        <end position="98"/>
    </location>
</feature>
<feature type="transmembrane region" description="Helical" evidence="3">
    <location>
        <begin position="1"/>
        <end position="21"/>
    </location>
</feature>
<feature type="transmembrane region" description="Helical" evidence="3">
    <location>
        <begin position="29"/>
        <end position="49"/>
    </location>
</feature>
<feature type="transmembrane region" description="Helical" evidence="3">
    <location>
        <begin position="58"/>
        <end position="78"/>
    </location>
</feature>
<accession>Q5BU90</accession>
<gene>
    <name type="primary">MT-ND4L</name>
    <name type="synonym">MTND4L</name>
    <name type="synonym">NADH4L</name>
    <name type="synonym">ND4L</name>
</gene>
<protein>
    <recommendedName>
        <fullName>NADH-ubiquinone oxidoreductase chain 4L</fullName>
        <ecNumber>7.1.1.2</ecNumber>
    </recommendedName>
    <alternativeName>
        <fullName>NADH dehydrogenase subunit 4L</fullName>
    </alternativeName>
</protein>
<geneLocation type="mitochondrion"/>
<keyword id="KW-0249">Electron transport</keyword>
<keyword id="KW-0472">Membrane</keyword>
<keyword id="KW-0496">Mitochondrion</keyword>
<keyword id="KW-0999">Mitochondrion inner membrane</keyword>
<keyword id="KW-0520">NAD</keyword>
<keyword id="KW-0679">Respiratory chain</keyword>
<keyword id="KW-1278">Translocase</keyword>
<keyword id="KW-0812">Transmembrane</keyword>
<keyword id="KW-1133">Transmembrane helix</keyword>
<keyword id="KW-0813">Transport</keyword>
<keyword id="KW-0830">Ubiquinone</keyword>